<gene>
    <name evidence="1" type="primary">dtd</name>
    <name type="ordered locus">PG_1994</name>
</gene>
<dbReference type="EC" id="3.1.1.96" evidence="1"/>
<dbReference type="EMBL" id="AE015924">
    <property type="protein sequence ID" value="AAQ66965.1"/>
    <property type="molecule type" value="Genomic_DNA"/>
</dbReference>
<dbReference type="RefSeq" id="WP_004583644.1">
    <property type="nucleotide sequence ID" value="NC_002950.2"/>
</dbReference>
<dbReference type="SMR" id="Q7MTG7"/>
<dbReference type="STRING" id="242619.PG_1994"/>
<dbReference type="EnsemblBacteria" id="AAQ66965">
    <property type="protein sequence ID" value="AAQ66965"/>
    <property type="gene ID" value="PG_1994"/>
</dbReference>
<dbReference type="GeneID" id="29257082"/>
<dbReference type="KEGG" id="pgi:PG_1994"/>
<dbReference type="eggNOG" id="COG1490">
    <property type="taxonomic scope" value="Bacteria"/>
</dbReference>
<dbReference type="HOGENOM" id="CLU_076901_1_0_10"/>
<dbReference type="Proteomes" id="UP000000588">
    <property type="component" value="Chromosome"/>
</dbReference>
<dbReference type="GO" id="GO:0005737">
    <property type="term" value="C:cytoplasm"/>
    <property type="evidence" value="ECO:0007669"/>
    <property type="project" value="UniProtKB-SubCell"/>
</dbReference>
<dbReference type="GO" id="GO:0051500">
    <property type="term" value="F:D-tyrosyl-tRNA(Tyr) deacylase activity"/>
    <property type="evidence" value="ECO:0007669"/>
    <property type="project" value="TreeGrafter"/>
</dbReference>
<dbReference type="GO" id="GO:0106026">
    <property type="term" value="F:Gly-tRNA(Ala) deacylase activity"/>
    <property type="evidence" value="ECO:0007669"/>
    <property type="project" value="UniProtKB-UniRule"/>
</dbReference>
<dbReference type="GO" id="GO:0043908">
    <property type="term" value="F:Ser(Gly)-tRNA(Ala) hydrolase activity"/>
    <property type="evidence" value="ECO:0007669"/>
    <property type="project" value="UniProtKB-UniRule"/>
</dbReference>
<dbReference type="GO" id="GO:0000049">
    <property type="term" value="F:tRNA binding"/>
    <property type="evidence" value="ECO:0007669"/>
    <property type="project" value="UniProtKB-UniRule"/>
</dbReference>
<dbReference type="GO" id="GO:0019478">
    <property type="term" value="P:D-amino acid catabolic process"/>
    <property type="evidence" value="ECO:0007669"/>
    <property type="project" value="UniProtKB-UniRule"/>
</dbReference>
<dbReference type="FunFam" id="3.50.80.10:FF:000001">
    <property type="entry name" value="D-aminoacyl-tRNA deacylase"/>
    <property type="match status" value="1"/>
</dbReference>
<dbReference type="Gene3D" id="3.50.80.10">
    <property type="entry name" value="D-tyrosyl-tRNA(Tyr) deacylase"/>
    <property type="match status" value="1"/>
</dbReference>
<dbReference type="HAMAP" id="MF_00518">
    <property type="entry name" value="Deacylase_Dtd"/>
    <property type="match status" value="1"/>
</dbReference>
<dbReference type="InterPro" id="IPR003732">
    <property type="entry name" value="Daa-tRNA_deacyls_DTD"/>
</dbReference>
<dbReference type="InterPro" id="IPR023509">
    <property type="entry name" value="DTD-like_sf"/>
</dbReference>
<dbReference type="NCBIfam" id="TIGR00256">
    <property type="entry name" value="D-aminoacyl-tRNA deacylase"/>
    <property type="match status" value="1"/>
</dbReference>
<dbReference type="PANTHER" id="PTHR10472:SF5">
    <property type="entry name" value="D-AMINOACYL-TRNA DEACYLASE 1"/>
    <property type="match status" value="1"/>
</dbReference>
<dbReference type="PANTHER" id="PTHR10472">
    <property type="entry name" value="D-TYROSYL-TRNA TYR DEACYLASE"/>
    <property type="match status" value="1"/>
</dbReference>
<dbReference type="Pfam" id="PF02580">
    <property type="entry name" value="Tyr_Deacylase"/>
    <property type="match status" value="1"/>
</dbReference>
<dbReference type="SUPFAM" id="SSF69500">
    <property type="entry name" value="DTD-like"/>
    <property type="match status" value="1"/>
</dbReference>
<organism>
    <name type="scientific">Porphyromonas gingivalis (strain ATCC BAA-308 / W83)</name>
    <dbReference type="NCBI Taxonomy" id="242619"/>
    <lineage>
        <taxon>Bacteria</taxon>
        <taxon>Pseudomonadati</taxon>
        <taxon>Bacteroidota</taxon>
        <taxon>Bacteroidia</taxon>
        <taxon>Bacteroidales</taxon>
        <taxon>Porphyromonadaceae</taxon>
        <taxon>Porphyromonas</taxon>
    </lineage>
</organism>
<feature type="chain" id="PRO_0000164572" description="D-aminoacyl-tRNA deacylase">
    <location>
        <begin position="1"/>
        <end position="150"/>
    </location>
</feature>
<feature type="short sequence motif" description="Gly-cisPro motif, important for rejection of L-amino acids" evidence="1">
    <location>
        <begin position="138"/>
        <end position="139"/>
    </location>
</feature>
<protein>
    <recommendedName>
        <fullName evidence="1">D-aminoacyl-tRNA deacylase</fullName>
        <shortName evidence="1">DTD</shortName>
        <ecNumber evidence="1">3.1.1.96</ecNumber>
    </recommendedName>
    <alternativeName>
        <fullName evidence="1">Gly-tRNA(Ala) deacylase</fullName>
    </alternativeName>
</protein>
<sequence length="150" mass="16270">MRVVIQRVTEASVSIRGALHSRIGQGVLILVGIEDRDGESDIELLTSKISNLRIFDDSEGVMNLSVKDINGEALVVSQFTLMGSTRKGNRPSYIKASRPEIAIPLYESFCNSLSAKLGKAVRQGVFGADMQVALVNDGPVTILIDTHNKE</sequence>
<evidence type="ECO:0000255" key="1">
    <source>
        <dbReference type="HAMAP-Rule" id="MF_00518"/>
    </source>
</evidence>
<accession>Q7MTG7</accession>
<proteinExistence type="inferred from homology"/>
<reference key="1">
    <citation type="journal article" date="2003" name="J. Bacteriol.">
        <title>Complete genome sequence of the oral pathogenic bacterium Porphyromonas gingivalis strain W83.</title>
        <authorList>
            <person name="Nelson K.E."/>
            <person name="Fleischmann R.D."/>
            <person name="DeBoy R.T."/>
            <person name="Paulsen I.T."/>
            <person name="Fouts D.E."/>
            <person name="Eisen J.A."/>
            <person name="Daugherty S.C."/>
            <person name="Dodson R.J."/>
            <person name="Durkin A.S."/>
            <person name="Gwinn M.L."/>
            <person name="Haft D.H."/>
            <person name="Kolonay J.F."/>
            <person name="Nelson W.C."/>
            <person name="Mason T.M."/>
            <person name="Tallon L."/>
            <person name="Gray J."/>
            <person name="Granger D."/>
            <person name="Tettelin H."/>
            <person name="Dong H."/>
            <person name="Galvin J.L."/>
            <person name="Duncan M.J."/>
            <person name="Dewhirst F.E."/>
            <person name="Fraser C.M."/>
        </authorList>
    </citation>
    <scope>NUCLEOTIDE SEQUENCE [LARGE SCALE GENOMIC DNA]</scope>
    <source>
        <strain>ATCC BAA-308 / W83</strain>
    </source>
</reference>
<comment type="function">
    <text evidence="1">An aminoacyl-tRNA editing enzyme that deacylates mischarged D-aminoacyl-tRNAs. Also deacylates mischarged glycyl-tRNA(Ala), protecting cells against glycine mischarging by AlaRS. Acts via tRNA-based rather than protein-based catalysis; rejects L-amino acids rather than detecting D-amino acids in the active site. By recycling D-aminoacyl-tRNA to D-amino acids and free tRNA molecules, this enzyme counteracts the toxicity associated with the formation of D-aminoacyl-tRNA entities in vivo and helps enforce protein L-homochirality.</text>
</comment>
<comment type="catalytic activity">
    <reaction evidence="1">
        <text>glycyl-tRNA(Ala) + H2O = tRNA(Ala) + glycine + H(+)</text>
        <dbReference type="Rhea" id="RHEA:53744"/>
        <dbReference type="Rhea" id="RHEA-COMP:9657"/>
        <dbReference type="Rhea" id="RHEA-COMP:13640"/>
        <dbReference type="ChEBI" id="CHEBI:15377"/>
        <dbReference type="ChEBI" id="CHEBI:15378"/>
        <dbReference type="ChEBI" id="CHEBI:57305"/>
        <dbReference type="ChEBI" id="CHEBI:78442"/>
        <dbReference type="ChEBI" id="CHEBI:78522"/>
        <dbReference type="EC" id="3.1.1.96"/>
    </reaction>
</comment>
<comment type="catalytic activity">
    <reaction evidence="1">
        <text>a D-aminoacyl-tRNA + H2O = a tRNA + a D-alpha-amino acid + H(+)</text>
        <dbReference type="Rhea" id="RHEA:13953"/>
        <dbReference type="Rhea" id="RHEA-COMP:10123"/>
        <dbReference type="Rhea" id="RHEA-COMP:10124"/>
        <dbReference type="ChEBI" id="CHEBI:15377"/>
        <dbReference type="ChEBI" id="CHEBI:15378"/>
        <dbReference type="ChEBI" id="CHEBI:59871"/>
        <dbReference type="ChEBI" id="CHEBI:78442"/>
        <dbReference type="ChEBI" id="CHEBI:79333"/>
        <dbReference type="EC" id="3.1.1.96"/>
    </reaction>
</comment>
<comment type="subunit">
    <text evidence="1">Homodimer.</text>
</comment>
<comment type="subcellular location">
    <subcellularLocation>
        <location evidence="1">Cytoplasm</location>
    </subcellularLocation>
</comment>
<comment type="domain">
    <text evidence="1">A Gly-cisPro motif from one monomer fits into the active site of the other monomer to allow specific chiral rejection of L-amino acids.</text>
</comment>
<comment type="similarity">
    <text evidence="1">Belongs to the DTD family.</text>
</comment>
<keyword id="KW-0963">Cytoplasm</keyword>
<keyword id="KW-0378">Hydrolase</keyword>
<keyword id="KW-1185">Reference proteome</keyword>
<keyword id="KW-0694">RNA-binding</keyword>
<keyword id="KW-0820">tRNA-binding</keyword>
<name>DTD_PORGI</name>